<dbReference type="EMBL" id="AAFI02000008">
    <property type="protein sequence ID" value="EAL70971.1"/>
    <property type="molecule type" value="Genomic_DNA"/>
</dbReference>
<dbReference type="RefSeq" id="XP_644996.1">
    <property type="nucleotide sequence ID" value="XM_639904.1"/>
</dbReference>
<dbReference type="STRING" id="44689.Q86IL5"/>
<dbReference type="PaxDb" id="44689-DDB0238106"/>
<dbReference type="EnsemblProtists" id="EAL70971">
    <property type="protein sequence ID" value="EAL70971"/>
    <property type="gene ID" value="DDB_G0272668"/>
</dbReference>
<dbReference type="GeneID" id="8618673"/>
<dbReference type="KEGG" id="ddi:DDB_G0272668"/>
<dbReference type="dictyBase" id="DDB_G0272668">
    <property type="gene designation" value="ppr2"/>
</dbReference>
<dbReference type="VEuPathDB" id="AmoebaDB:DDB_G0272668"/>
<dbReference type="eggNOG" id="KOG3175">
    <property type="taxonomic scope" value="Eukaryota"/>
</dbReference>
<dbReference type="HOGENOM" id="CLU_984923_0_0_1"/>
<dbReference type="InParanoid" id="Q86IL5"/>
<dbReference type="OMA" id="CAVEKMG"/>
<dbReference type="PhylomeDB" id="Q86IL5"/>
<dbReference type="PRO" id="PR:Q86IL5"/>
<dbReference type="Proteomes" id="UP000002195">
    <property type="component" value="Chromosome 2"/>
</dbReference>
<dbReference type="GO" id="GO:0005737">
    <property type="term" value="C:cytoplasm"/>
    <property type="evidence" value="ECO:0000318"/>
    <property type="project" value="GO_Central"/>
</dbReference>
<dbReference type="GO" id="GO:0005634">
    <property type="term" value="C:nucleus"/>
    <property type="evidence" value="ECO:0000318"/>
    <property type="project" value="GO_Central"/>
</dbReference>
<dbReference type="GO" id="GO:0030289">
    <property type="term" value="C:protein phosphatase 4 complex"/>
    <property type="evidence" value="ECO:0000314"/>
    <property type="project" value="dictyBase"/>
</dbReference>
<dbReference type="GO" id="GO:0019888">
    <property type="term" value="F:protein phosphatase regulator activity"/>
    <property type="evidence" value="ECO:0000318"/>
    <property type="project" value="GO_Central"/>
</dbReference>
<dbReference type="InterPro" id="IPR015267">
    <property type="entry name" value="PPP4R2"/>
</dbReference>
<dbReference type="PANTHER" id="PTHR16487">
    <property type="entry name" value="PPP4R2-RELATED PROTEIN"/>
    <property type="match status" value="1"/>
</dbReference>
<dbReference type="PANTHER" id="PTHR16487:SF0">
    <property type="entry name" value="PROTEIN PHOSPHATASE 4 REGULATORY SUBUNIT 2-RELATED"/>
    <property type="match status" value="1"/>
</dbReference>
<dbReference type="Pfam" id="PF09184">
    <property type="entry name" value="PPP4R2"/>
    <property type="match status" value="1"/>
</dbReference>
<reference key="1">
    <citation type="journal article" date="2002" name="Nature">
        <title>Sequence and analysis of chromosome 2 of Dictyostelium discoideum.</title>
        <authorList>
            <person name="Gloeckner G."/>
            <person name="Eichinger L."/>
            <person name="Szafranski K."/>
            <person name="Pachebat J.A."/>
            <person name="Bankier A.T."/>
            <person name="Dear P.H."/>
            <person name="Lehmann R."/>
            <person name="Baumgart C."/>
            <person name="Parra G."/>
            <person name="Abril J.F."/>
            <person name="Guigo R."/>
            <person name="Kumpf K."/>
            <person name="Tunggal B."/>
            <person name="Cox E.C."/>
            <person name="Quail M.A."/>
            <person name="Platzer M."/>
            <person name="Rosenthal A."/>
            <person name="Noegel A.A."/>
        </authorList>
    </citation>
    <scope>NUCLEOTIDE SEQUENCE [LARGE SCALE GENOMIC DNA]</scope>
    <source>
        <strain>AX4</strain>
    </source>
</reference>
<reference key="2">
    <citation type="journal article" date="2005" name="Nature">
        <title>The genome of the social amoeba Dictyostelium discoideum.</title>
        <authorList>
            <person name="Eichinger L."/>
            <person name="Pachebat J.A."/>
            <person name="Gloeckner G."/>
            <person name="Rajandream M.A."/>
            <person name="Sucgang R."/>
            <person name="Berriman M."/>
            <person name="Song J."/>
            <person name="Olsen R."/>
            <person name="Szafranski K."/>
            <person name="Xu Q."/>
            <person name="Tunggal B."/>
            <person name="Kummerfeld S."/>
            <person name="Madera M."/>
            <person name="Konfortov B.A."/>
            <person name="Rivero F."/>
            <person name="Bankier A.T."/>
            <person name="Lehmann R."/>
            <person name="Hamlin N."/>
            <person name="Davies R."/>
            <person name="Gaudet P."/>
            <person name="Fey P."/>
            <person name="Pilcher K."/>
            <person name="Chen G."/>
            <person name="Saunders D."/>
            <person name="Sodergren E.J."/>
            <person name="Davis P."/>
            <person name="Kerhornou A."/>
            <person name="Nie X."/>
            <person name="Hall N."/>
            <person name="Anjard C."/>
            <person name="Hemphill L."/>
            <person name="Bason N."/>
            <person name="Farbrother P."/>
            <person name="Desany B."/>
            <person name="Just E."/>
            <person name="Morio T."/>
            <person name="Rost R."/>
            <person name="Churcher C.M."/>
            <person name="Cooper J."/>
            <person name="Haydock S."/>
            <person name="van Driessche N."/>
            <person name="Cronin A."/>
            <person name="Goodhead I."/>
            <person name="Muzny D.M."/>
            <person name="Mourier T."/>
            <person name="Pain A."/>
            <person name="Lu M."/>
            <person name="Harper D."/>
            <person name="Lindsay R."/>
            <person name="Hauser H."/>
            <person name="James K.D."/>
            <person name="Quiles M."/>
            <person name="Madan Babu M."/>
            <person name="Saito T."/>
            <person name="Buchrieser C."/>
            <person name="Wardroper A."/>
            <person name="Felder M."/>
            <person name="Thangavelu M."/>
            <person name="Johnson D."/>
            <person name="Knights A."/>
            <person name="Loulseged H."/>
            <person name="Mungall K.L."/>
            <person name="Oliver K."/>
            <person name="Price C."/>
            <person name="Quail M.A."/>
            <person name="Urushihara H."/>
            <person name="Hernandez J."/>
            <person name="Rabbinowitsch E."/>
            <person name="Steffen D."/>
            <person name="Sanders M."/>
            <person name="Ma J."/>
            <person name="Kohara Y."/>
            <person name="Sharp S."/>
            <person name="Simmonds M.N."/>
            <person name="Spiegler S."/>
            <person name="Tivey A."/>
            <person name="Sugano S."/>
            <person name="White B."/>
            <person name="Walker D."/>
            <person name="Woodward J.R."/>
            <person name="Winckler T."/>
            <person name="Tanaka Y."/>
            <person name="Shaulsky G."/>
            <person name="Schleicher M."/>
            <person name="Weinstock G.M."/>
            <person name="Rosenthal A."/>
            <person name="Cox E.C."/>
            <person name="Chisholm R.L."/>
            <person name="Gibbs R.A."/>
            <person name="Loomis W.F."/>
            <person name="Platzer M."/>
            <person name="Kay R.R."/>
            <person name="Williams J.G."/>
            <person name="Dear P.H."/>
            <person name="Noegel A.A."/>
            <person name="Barrell B.G."/>
            <person name="Kuspa A."/>
        </authorList>
    </citation>
    <scope>NUCLEOTIDE SEQUENCE [LARGE SCALE GENOMIC DNA]</scope>
    <source>
        <strain>AX4</strain>
    </source>
</reference>
<reference key="3">
    <citation type="journal article" date="2007" name="Mol. Cell. Biol.">
        <title>MEK1 and protein phosphatase 4 coordinate Dictyostelium development and chemotaxis.</title>
        <authorList>
            <person name="Mendoza M.C."/>
            <person name="Booth E.O."/>
            <person name="Shaulsky G."/>
            <person name="Firtel R.A."/>
        </authorList>
    </citation>
    <scope>FUNCTION</scope>
    <scope>PROBABLE COMPONENT OF A COMPLEX WITH PPP4C</scope>
</reference>
<protein>
    <recommendedName>
        <fullName>Serine/threonine-protein phosphatase 4 regulatory subunit 2</fullName>
    </recommendedName>
</protein>
<name>PP4R2_DICDI</name>
<gene>
    <name type="primary">ppp4r2</name>
    <name type="synonym">ppr2</name>
    <name type="ORF">DDB_G0272668</name>
</gene>
<organism>
    <name type="scientific">Dictyostelium discoideum</name>
    <name type="common">Social amoeba</name>
    <dbReference type="NCBI Taxonomy" id="44689"/>
    <lineage>
        <taxon>Eukaryota</taxon>
        <taxon>Amoebozoa</taxon>
        <taxon>Evosea</taxon>
        <taxon>Eumycetozoa</taxon>
        <taxon>Dictyostelia</taxon>
        <taxon>Dictyosteliales</taxon>
        <taxon>Dictyosteliaceae</taxon>
        <taxon>Dictyostelium</taxon>
    </lineage>
</organism>
<sequence>MTLVEYSETLKKSLEEFCKQDKKVVTPELNSIIENISKTGITCYPWNILKELFYFKLNEILDIFEKEYIATSSTTTTSTTTTTTNTSSSSTNSPQSPQSPQSPQLNVNIKDEEMQKIKNQVNLSGLIKMKKEFLDSFKESKLSPFTVQRLCELIINYKMYTSFSKYLCAVEKMLNVSTLPHLTPEEVIEFNKNQNSGSRLNSSTNTTTTTTTTTTTTTPTEKGNNDQPNLDSFAFSSSFTTSFPSDTTSSTSTSLSTDQEMKDLDVEQQKDDTDNTANENESK</sequence>
<feature type="chain" id="PRO_0000355973" description="Serine/threonine-protein phosphatase 4 regulatory subunit 2">
    <location>
        <begin position="1"/>
        <end position="283"/>
    </location>
</feature>
<feature type="region of interest" description="Disordered" evidence="1">
    <location>
        <begin position="75"/>
        <end position="105"/>
    </location>
</feature>
<feature type="region of interest" description="Disordered" evidence="1">
    <location>
        <begin position="192"/>
        <end position="283"/>
    </location>
</feature>
<feature type="compositionally biased region" description="Low complexity" evidence="1">
    <location>
        <begin position="75"/>
        <end position="104"/>
    </location>
</feature>
<feature type="compositionally biased region" description="Polar residues" evidence="1">
    <location>
        <begin position="192"/>
        <end position="203"/>
    </location>
</feature>
<feature type="compositionally biased region" description="Low complexity" evidence="1">
    <location>
        <begin position="204"/>
        <end position="220"/>
    </location>
</feature>
<feature type="compositionally biased region" description="Polar residues" evidence="1">
    <location>
        <begin position="221"/>
        <end position="230"/>
    </location>
</feature>
<feature type="compositionally biased region" description="Low complexity" evidence="1">
    <location>
        <begin position="232"/>
        <end position="257"/>
    </location>
</feature>
<feature type="compositionally biased region" description="Basic and acidic residues" evidence="1">
    <location>
        <begin position="259"/>
        <end position="273"/>
    </location>
</feature>
<comment type="function">
    <text evidence="2">Probable regulatory subunit of serine/threonine-protein phosphatase 4 (PP4).</text>
</comment>
<comment type="subunit">
    <text>Serine/threonine-protein phosphatase 4 (PP4) occurs in different assemblies of the catalytic and one or more regulatory subunits. Probably part of a PP4 complex containing ppp4c and ppp4r2.</text>
</comment>
<comment type="similarity">
    <text evidence="3">Belongs to the PPP4R2 family.</text>
</comment>
<accession>Q86IL5</accession>
<accession>Q558S0</accession>
<evidence type="ECO:0000256" key="1">
    <source>
        <dbReference type="SAM" id="MobiDB-lite"/>
    </source>
</evidence>
<evidence type="ECO:0000269" key="2">
    <source>
    </source>
</evidence>
<evidence type="ECO:0000305" key="3"/>
<proteinExistence type="inferred from homology"/>
<keyword id="KW-1185">Reference proteome</keyword>